<feature type="chain" id="PRO_0000013127" description="Prostaglandin E synthase 2">
    <location>
        <begin position="1"/>
        <end position="377"/>
    </location>
</feature>
<feature type="chain" id="PRO_0000013128" description="Prostaglandin E synthase 2 truncated form" evidence="1">
    <location>
        <begin position="88"/>
        <end position="377"/>
    </location>
</feature>
<feature type="topological domain" description="Lumenal" evidence="4">
    <location>
        <begin position="1"/>
        <end position="57"/>
    </location>
</feature>
<feature type="transmembrane region" description="Helical" evidence="4">
    <location>
        <begin position="58"/>
        <end position="74"/>
    </location>
</feature>
<feature type="topological domain" description="Cytoplasmic" evidence="4">
    <location>
        <begin position="75"/>
        <end position="377"/>
    </location>
</feature>
<feature type="domain" description="Glutaredoxin" evidence="5">
    <location>
        <begin position="90"/>
        <end position="193"/>
    </location>
</feature>
<feature type="domain" description="GST C-terminal">
    <location>
        <begin position="263"/>
        <end position="377"/>
    </location>
</feature>
<feature type="binding site" evidence="3">
    <location>
        <position position="148"/>
    </location>
    <ligand>
        <name>glutathione</name>
        <dbReference type="ChEBI" id="CHEBI:57925"/>
    </ligand>
</feature>
<feature type="binding site" evidence="3">
    <location>
        <begin position="164"/>
        <end position="165"/>
    </location>
    <ligand>
        <name>glutathione</name>
        <dbReference type="ChEBI" id="CHEBI:57925"/>
    </ligand>
</feature>
<feature type="site" description="Cleavage" evidence="1">
    <location>
        <begin position="87"/>
        <end position="88"/>
    </location>
</feature>
<feature type="modified residue" description="Phosphoserine" evidence="16">
    <location>
        <position position="95"/>
    </location>
</feature>
<feature type="sequence variant" id="VAR_049494" description="In dbSNP:rs13283456.">
    <original>R</original>
    <variation>H</variation>
    <location>
        <position position="298"/>
    </location>
</feature>
<feature type="mutagenesis site" description="Loss of prostaglandin-E synthase activity. Can bind glutathione-heme and exhibits PGH2 degradation activity." evidence="7 10">
    <original>C</original>
    <variation>S</variation>
    <location>
        <position position="110"/>
    </location>
</feature>
<feature type="mutagenesis site" description="Slightly decreased prostaglandin-E synthase activity." evidence="7">
    <original>C</original>
    <variation>S</variation>
    <location>
        <position position="113"/>
    </location>
</feature>
<feature type="sequence conflict" description="In Ref. 2; BAD97240." evidence="13" ref="2">
    <original>G</original>
    <variation>S</variation>
    <location>
        <position position="319"/>
    </location>
</feature>
<comment type="function">
    <text evidence="3 7 10 11">Isomerase that catalyzes the conversion of PGH2 into the more stable prostaglandin E2 (PGE2) (in vitro) (PubMed:12804604, PubMed:17585783, PubMed:18198127). The biological function and the GSH-dependent property of PTGES2 is still under debate (PubMed:17585783, PubMed:18198127). In vivo, PTGES2 could form a complex with GSH and heme and would not participate in PGE2 synthesis but would catalyze the degradation of prostaglandin E2 H2 (PGH2) to 12(S)-hydroxy-5(Z),8(E),10(E)-heptadecatrienoic acid (HHT) and malondialdehyde (MDA) (By similarity) (PubMed:17585783).</text>
</comment>
<comment type="catalytic activity">
    <reaction evidence="7 10 11">
        <text>prostaglandin H2 = prostaglandin E2</text>
        <dbReference type="Rhea" id="RHEA:12893"/>
        <dbReference type="ChEBI" id="CHEBI:57405"/>
        <dbReference type="ChEBI" id="CHEBI:606564"/>
        <dbReference type="EC" id="5.3.99.3"/>
    </reaction>
    <physiologicalReaction direction="left-to-right" evidence="14">
        <dbReference type="Rhea" id="RHEA:12894"/>
    </physiologicalReaction>
</comment>
<comment type="catalytic activity">
    <reaction evidence="10">
        <text>prostaglandin H2 = (12S)-hydroxy-(5Z,8E,10E)-heptadecatrienoate + malonaldehyde</text>
        <dbReference type="Rhea" id="RHEA:48644"/>
        <dbReference type="ChEBI" id="CHEBI:57405"/>
        <dbReference type="ChEBI" id="CHEBI:90694"/>
        <dbReference type="ChEBI" id="CHEBI:566274"/>
    </reaction>
    <physiologicalReaction direction="left-to-right" evidence="15">
        <dbReference type="Rhea" id="RHEA:48645"/>
    </physiologicalReaction>
</comment>
<comment type="activity regulation">
    <text evidence="7">Isomerase activity is increased by sulfhydril compounds. Dithiothreitol (DTT) is most effective, followed by dihydrolipoic acid, glutathione (GSH) and 2-mercaptoethanol.</text>
</comment>
<comment type="biophysicochemical properties">
    <kinetics>
        <KM evidence="10">56 uM for PGH2 (for the GSH-heme complex-bound enzyme)</KM>
    </kinetics>
</comment>
<comment type="pathway">
    <text>Lipid metabolism; prostaglandin biosynthesis.</text>
</comment>
<comment type="subunit">
    <text evidence="1 2 9">Homodimer. May interact with CEBPB (By similarity). Interacts with EXOSC10.</text>
</comment>
<comment type="interaction">
    <interactant intactId="EBI-681645">
        <id>Q9H7Z7</id>
    </interactant>
    <interactant intactId="EBI-10247920">
        <id>Q5VU69</id>
        <label>CFAP141</label>
    </interactant>
    <organismsDiffer>false</organismsDiffer>
    <experiments>3</experiments>
</comment>
<comment type="interaction">
    <interactant intactId="EBI-681645">
        <id>Q9H7Z7</id>
    </interactant>
    <interactant intactId="EBI-25475871">
        <id>PRO_0000449625</id>
        <label>rep</label>
        <dbReference type="UniProtKB" id="P0DTD1"/>
    </interactant>
    <organismsDiffer>true</organismsDiffer>
    <experiments>3</experiments>
</comment>
<comment type="subcellular location">
    <subcellularLocation>
        <location evidence="8">Golgi apparatus membrane</location>
        <topology evidence="4">Single-pass membrane protein</topology>
    </subcellularLocation>
</comment>
<comment type="subcellular location">
    <molecule>Prostaglandin E synthase 2 truncated form</molecule>
    <subcellularLocation>
        <location evidence="8">Cytoplasm</location>
        <location evidence="8">Perinuclear region</location>
    </subcellularLocation>
    <text evidence="8">Synthesized as a Golgi membrane-bound protein, which is further cleaved into the predominant soluble truncated form. The truncated form is cytoplasmic and is enriched in the perinuclear region.</text>
</comment>
<comment type="tissue specificity">
    <text evidence="6">Widely expressed. Expressed in the heart, including apex, inter-ventricular septum, both atria and ventricles, but not in the aorta. Also expressed in fetal heart. Detected in various regions of the brain: cerebellum; occipital, frontal and parietal lobes. Also expressed in the lymph nodes, skeletal muscle, kidney and trachea, but not in the thymus or lung. Overexpressed in colorectal cancer.</text>
</comment>
<comment type="PTM">
    <text evidence="8">Synthesized as a Golgi membrane-associated protein, and the proteolytic removal of the N-terminal hydrophobic domain leads to the formation of a mature cytosolic enzyme.</text>
</comment>
<comment type="similarity">
    <text evidence="13">Belongs to the GST superfamily.</text>
</comment>
<comment type="caution">
    <text evidence="2 3 11 13">It is not known if heme and GST are required for prostaglandin synthase activity. The protein copurifies with heme and GST when DTT is omitted during the purification procedure. The GSH-heme complex-bound enzyme has been proposed to act as a lyase and catalyze the degradation of prostaglandin E2 H2 (PGH2) to 12(S)-hydroxy-5(Z),8(E),10(E)-heptadecatrienoic acid (HHT) and malondialdehyde (MDA). According to PubMed:18198127, boiling the enzyme leads to loss of prostaglandin synthase activity, but does not eliminate the lyase activity. Besides, free heme can catalyze the formation of 12L-hydroxy-5,8,10-heptadecatrienoic acid (HHT) (PubMed:18198127). A more recent study demonstrates the GSH-dependent property of PTGES2, DTT dissociates the bound heme to produce active PGE2 synthase in vitro (By similarity). PTGES2 can only catalyzes PGE2 synthesis in the free state as an enzyme, while in vivo it forms a complex with heme and does not participate in PGE2 synthesis (By similarity). In agreement with this study, the in vivo evidence from PTGES2 deficient mice do not show that this protein is responsible for the PGE2 production under basal or pathophysiological conditions (By similarity).</text>
</comment>
<gene>
    <name type="primary">PTGES2</name>
    <name type="synonym">C9orf15</name>
    <name type="synonym">PGES2</name>
</gene>
<sequence length="377" mass="41943">MDPAARVVRALWPGGCALAWRLGGRPQPLLPTQSRAGFAGAAGGPSPVAAARKGSPRLLGAAALALGGALGLYHTARWHLRAQDLHAERSAAQLSLSSRLQLTLYQYKTCPFCSKVRAFLDFHALPYQVVEVNPVRRAEIKFSSYRKVPILVAQEGESSQQLNDSSVIISALKTYLVSGQPLEEIITYYPAMKAVNEQGKEVTEFGNKYWLMLNEKEAQQVYGGKEARTEEMKWRQWADDWLVHLISPNVYRTPTEALASFDYIVREGKFGAVEGAVAKYMGAAAMYLISKRLKSRHRLQDNVREDLYEAADKWVAAVGKDRPFMGGQKPNLADLAVYGVLRVMEGLDAFDDLMQHTHIQPWYLRVERAITEASPAH</sequence>
<accession>Q9H7Z7</accession>
<accession>Q53EW9</accession>
<accession>Q5SYV6</accession>
<accession>Q96GI0</accession>
<accession>Q96GL2</accession>
<name>PGES2_HUMAN</name>
<organism>
    <name type="scientific">Homo sapiens</name>
    <name type="common">Human</name>
    <dbReference type="NCBI Taxonomy" id="9606"/>
    <lineage>
        <taxon>Eukaryota</taxon>
        <taxon>Metazoa</taxon>
        <taxon>Chordata</taxon>
        <taxon>Craniata</taxon>
        <taxon>Vertebrata</taxon>
        <taxon>Euteleostomi</taxon>
        <taxon>Mammalia</taxon>
        <taxon>Eutheria</taxon>
        <taxon>Euarchontoglires</taxon>
        <taxon>Primates</taxon>
        <taxon>Haplorrhini</taxon>
        <taxon>Catarrhini</taxon>
        <taxon>Hominidae</taxon>
        <taxon>Homo</taxon>
    </lineage>
</organism>
<evidence type="ECO:0000250" key="1">
    <source>
        <dbReference type="UniProtKB" id="Q66LN0"/>
    </source>
</evidence>
<evidence type="ECO:0000250" key="2">
    <source>
        <dbReference type="UniProtKB" id="Q8BWM0"/>
    </source>
</evidence>
<evidence type="ECO:0000250" key="3">
    <source>
        <dbReference type="UniProtKB" id="Q9N0A4"/>
    </source>
</evidence>
<evidence type="ECO:0000255" key="4"/>
<evidence type="ECO:0000255" key="5">
    <source>
        <dbReference type="PROSITE-ProRule" id="PRU00686"/>
    </source>
</evidence>
<evidence type="ECO:0000269" key="6">
    <source>
    </source>
</evidence>
<evidence type="ECO:0000269" key="7">
    <source>
    </source>
</evidence>
<evidence type="ECO:0000269" key="8">
    <source>
    </source>
</evidence>
<evidence type="ECO:0000269" key="9">
    <source>
    </source>
</evidence>
<evidence type="ECO:0000269" key="10">
    <source>
    </source>
</evidence>
<evidence type="ECO:0000269" key="11">
    <source>
    </source>
</evidence>
<evidence type="ECO:0000303" key="12">
    <source>
    </source>
</evidence>
<evidence type="ECO:0000305" key="13"/>
<evidence type="ECO:0000305" key="14">
    <source>
    </source>
</evidence>
<evidence type="ECO:0000305" key="15">
    <source>
    </source>
</evidence>
<evidence type="ECO:0007744" key="16">
    <source>
    </source>
</evidence>
<keyword id="KW-0963">Cytoplasm</keyword>
<keyword id="KW-0275">Fatty acid biosynthesis</keyword>
<keyword id="KW-0276">Fatty acid metabolism</keyword>
<keyword id="KW-0333">Golgi apparatus</keyword>
<keyword id="KW-0413">Isomerase</keyword>
<keyword id="KW-0444">Lipid biosynthesis</keyword>
<keyword id="KW-0443">Lipid metabolism</keyword>
<keyword id="KW-0472">Membrane</keyword>
<keyword id="KW-0597">Phosphoprotein</keyword>
<keyword id="KW-0643">Prostaglandin biosynthesis</keyword>
<keyword id="KW-0644">Prostaglandin metabolism</keyword>
<keyword id="KW-1267">Proteomics identification</keyword>
<keyword id="KW-1185">Reference proteome</keyword>
<keyword id="KW-0812">Transmembrane</keyword>
<keyword id="KW-1133">Transmembrane helix</keyword>
<reference key="1">
    <citation type="journal article" date="2004" name="Nat. Genet.">
        <title>Complete sequencing and characterization of 21,243 full-length human cDNAs.</title>
        <authorList>
            <person name="Ota T."/>
            <person name="Suzuki Y."/>
            <person name="Nishikawa T."/>
            <person name="Otsuki T."/>
            <person name="Sugiyama T."/>
            <person name="Irie R."/>
            <person name="Wakamatsu A."/>
            <person name="Hayashi K."/>
            <person name="Sato H."/>
            <person name="Nagai K."/>
            <person name="Kimura K."/>
            <person name="Makita H."/>
            <person name="Sekine M."/>
            <person name="Obayashi M."/>
            <person name="Nishi T."/>
            <person name="Shibahara T."/>
            <person name="Tanaka T."/>
            <person name="Ishii S."/>
            <person name="Yamamoto J."/>
            <person name="Saito K."/>
            <person name="Kawai Y."/>
            <person name="Isono Y."/>
            <person name="Nakamura Y."/>
            <person name="Nagahari K."/>
            <person name="Murakami K."/>
            <person name="Yasuda T."/>
            <person name="Iwayanagi T."/>
            <person name="Wagatsuma M."/>
            <person name="Shiratori A."/>
            <person name="Sudo H."/>
            <person name="Hosoiri T."/>
            <person name="Kaku Y."/>
            <person name="Kodaira H."/>
            <person name="Kondo H."/>
            <person name="Sugawara M."/>
            <person name="Takahashi M."/>
            <person name="Kanda K."/>
            <person name="Yokoi T."/>
            <person name="Furuya T."/>
            <person name="Kikkawa E."/>
            <person name="Omura Y."/>
            <person name="Abe K."/>
            <person name="Kamihara K."/>
            <person name="Katsuta N."/>
            <person name="Sato K."/>
            <person name="Tanikawa M."/>
            <person name="Yamazaki M."/>
            <person name="Ninomiya K."/>
            <person name="Ishibashi T."/>
            <person name="Yamashita H."/>
            <person name="Murakawa K."/>
            <person name="Fujimori K."/>
            <person name="Tanai H."/>
            <person name="Kimata M."/>
            <person name="Watanabe M."/>
            <person name="Hiraoka S."/>
            <person name="Chiba Y."/>
            <person name="Ishida S."/>
            <person name="Ono Y."/>
            <person name="Takiguchi S."/>
            <person name="Watanabe S."/>
            <person name="Yosida M."/>
            <person name="Hotuta T."/>
            <person name="Kusano J."/>
            <person name="Kanehori K."/>
            <person name="Takahashi-Fujii A."/>
            <person name="Hara H."/>
            <person name="Tanase T.-O."/>
            <person name="Nomura Y."/>
            <person name="Togiya S."/>
            <person name="Komai F."/>
            <person name="Hara R."/>
            <person name="Takeuchi K."/>
            <person name="Arita M."/>
            <person name="Imose N."/>
            <person name="Musashino K."/>
            <person name="Yuuki H."/>
            <person name="Oshima A."/>
            <person name="Sasaki N."/>
            <person name="Aotsuka S."/>
            <person name="Yoshikawa Y."/>
            <person name="Matsunawa H."/>
            <person name="Ichihara T."/>
            <person name="Shiohata N."/>
            <person name="Sano S."/>
            <person name="Moriya S."/>
            <person name="Momiyama H."/>
            <person name="Satoh N."/>
            <person name="Takami S."/>
            <person name="Terashima Y."/>
            <person name="Suzuki O."/>
            <person name="Nakagawa S."/>
            <person name="Senoh A."/>
            <person name="Mizoguchi H."/>
            <person name="Goto Y."/>
            <person name="Shimizu F."/>
            <person name="Wakebe H."/>
            <person name="Hishigaki H."/>
            <person name="Watanabe T."/>
            <person name="Sugiyama A."/>
            <person name="Takemoto M."/>
            <person name="Kawakami B."/>
            <person name="Yamazaki M."/>
            <person name="Watanabe K."/>
            <person name="Kumagai A."/>
            <person name="Itakura S."/>
            <person name="Fukuzumi Y."/>
            <person name="Fujimori Y."/>
            <person name="Komiyama M."/>
            <person name="Tashiro H."/>
            <person name="Tanigami A."/>
            <person name="Fujiwara T."/>
            <person name="Ono T."/>
            <person name="Yamada K."/>
            <person name="Fujii Y."/>
            <person name="Ozaki K."/>
            <person name="Hirao M."/>
            <person name="Ohmori Y."/>
            <person name="Kawabata A."/>
            <person name="Hikiji T."/>
            <person name="Kobatake N."/>
            <person name="Inagaki H."/>
            <person name="Ikema Y."/>
            <person name="Okamoto S."/>
            <person name="Okitani R."/>
            <person name="Kawakami T."/>
            <person name="Noguchi S."/>
            <person name="Itoh T."/>
            <person name="Shigeta K."/>
            <person name="Senba T."/>
            <person name="Matsumura K."/>
            <person name="Nakajima Y."/>
            <person name="Mizuno T."/>
            <person name="Morinaga M."/>
            <person name="Sasaki M."/>
            <person name="Togashi T."/>
            <person name="Oyama M."/>
            <person name="Hata H."/>
            <person name="Watanabe M."/>
            <person name="Komatsu T."/>
            <person name="Mizushima-Sugano J."/>
            <person name="Satoh T."/>
            <person name="Shirai Y."/>
            <person name="Takahashi Y."/>
            <person name="Nakagawa K."/>
            <person name="Okumura K."/>
            <person name="Nagase T."/>
            <person name="Nomura N."/>
            <person name="Kikuchi H."/>
            <person name="Masuho Y."/>
            <person name="Yamashita R."/>
            <person name="Nakai K."/>
            <person name="Yada T."/>
            <person name="Nakamura Y."/>
            <person name="Ohara O."/>
            <person name="Isogai T."/>
            <person name="Sugano S."/>
        </authorList>
    </citation>
    <scope>NUCLEOTIDE SEQUENCE [LARGE SCALE MRNA]</scope>
    <source>
        <tissue>Embryo</tissue>
    </source>
</reference>
<reference key="2">
    <citation type="submission" date="2005-04" db="EMBL/GenBank/DDBJ databases">
        <authorList>
            <person name="Totoki Y."/>
            <person name="Toyoda A."/>
            <person name="Takeda T."/>
            <person name="Sakaki Y."/>
            <person name="Tanaka A."/>
            <person name="Yokoyama S."/>
        </authorList>
    </citation>
    <scope>NUCLEOTIDE SEQUENCE [LARGE SCALE MRNA]</scope>
</reference>
<reference key="3">
    <citation type="journal article" date="2004" name="Nature">
        <title>DNA sequence and analysis of human chromosome 9.</title>
        <authorList>
            <person name="Humphray S.J."/>
            <person name="Oliver K."/>
            <person name="Hunt A.R."/>
            <person name="Plumb R.W."/>
            <person name="Loveland J.E."/>
            <person name="Howe K.L."/>
            <person name="Andrews T.D."/>
            <person name="Searle S."/>
            <person name="Hunt S.E."/>
            <person name="Scott C.E."/>
            <person name="Jones M.C."/>
            <person name="Ainscough R."/>
            <person name="Almeida J.P."/>
            <person name="Ambrose K.D."/>
            <person name="Ashwell R.I.S."/>
            <person name="Babbage A.K."/>
            <person name="Babbage S."/>
            <person name="Bagguley C.L."/>
            <person name="Bailey J."/>
            <person name="Banerjee R."/>
            <person name="Barker D.J."/>
            <person name="Barlow K.F."/>
            <person name="Bates K."/>
            <person name="Beasley H."/>
            <person name="Beasley O."/>
            <person name="Bird C.P."/>
            <person name="Bray-Allen S."/>
            <person name="Brown A.J."/>
            <person name="Brown J.Y."/>
            <person name="Burford D."/>
            <person name="Burrill W."/>
            <person name="Burton J."/>
            <person name="Carder C."/>
            <person name="Carter N.P."/>
            <person name="Chapman J.C."/>
            <person name="Chen Y."/>
            <person name="Clarke G."/>
            <person name="Clark S.Y."/>
            <person name="Clee C.M."/>
            <person name="Clegg S."/>
            <person name="Collier R.E."/>
            <person name="Corby N."/>
            <person name="Crosier M."/>
            <person name="Cummings A.T."/>
            <person name="Davies J."/>
            <person name="Dhami P."/>
            <person name="Dunn M."/>
            <person name="Dutta I."/>
            <person name="Dyer L.W."/>
            <person name="Earthrowl M.E."/>
            <person name="Faulkner L."/>
            <person name="Fleming C.J."/>
            <person name="Frankish A."/>
            <person name="Frankland J.A."/>
            <person name="French L."/>
            <person name="Fricker D.G."/>
            <person name="Garner P."/>
            <person name="Garnett J."/>
            <person name="Ghori J."/>
            <person name="Gilbert J.G.R."/>
            <person name="Glison C."/>
            <person name="Grafham D.V."/>
            <person name="Gribble S."/>
            <person name="Griffiths C."/>
            <person name="Griffiths-Jones S."/>
            <person name="Grocock R."/>
            <person name="Guy J."/>
            <person name="Hall R.E."/>
            <person name="Hammond S."/>
            <person name="Harley J.L."/>
            <person name="Harrison E.S.I."/>
            <person name="Hart E.A."/>
            <person name="Heath P.D."/>
            <person name="Henderson C.D."/>
            <person name="Hopkins B.L."/>
            <person name="Howard P.J."/>
            <person name="Howden P.J."/>
            <person name="Huckle E."/>
            <person name="Johnson C."/>
            <person name="Johnson D."/>
            <person name="Joy A.A."/>
            <person name="Kay M."/>
            <person name="Keenan S."/>
            <person name="Kershaw J.K."/>
            <person name="Kimberley A.M."/>
            <person name="King A."/>
            <person name="Knights A."/>
            <person name="Laird G.K."/>
            <person name="Langford C."/>
            <person name="Lawlor S."/>
            <person name="Leongamornlert D.A."/>
            <person name="Leversha M."/>
            <person name="Lloyd C."/>
            <person name="Lloyd D.M."/>
            <person name="Lovell J."/>
            <person name="Martin S."/>
            <person name="Mashreghi-Mohammadi M."/>
            <person name="Matthews L."/>
            <person name="McLaren S."/>
            <person name="McLay K.E."/>
            <person name="McMurray A."/>
            <person name="Milne S."/>
            <person name="Nickerson T."/>
            <person name="Nisbett J."/>
            <person name="Nordsiek G."/>
            <person name="Pearce A.V."/>
            <person name="Peck A.I."/>
            <person name="Porter K.M."/>
            <person name="Pandian R."/>
            <person name="Pelan S."/>
            <person name="Phillimore B."/>
            <person name="Povey S."/>
            <person name="Ramsey Y."/>
            <person name="Rand V."/>
            <person name="Scharfe M."/>
            <person name="Sehra H.K."/>
            <person name="Shownkeen R."/>
            <person name="Sims S.K."/>
            <person name="Skuce C.D."/>
            <person name="Smith M."/>
            <person name="Steward C.A."/>
            <person name="Swarbreck D."/>
            <person name="Sycamore N."/>
            <person name="Tester J."/>
            <person name="Thorpe A."/>
            <person name="Tracey A."/>
            <person name="Tromans A."/>
            <person name="Thomas D.W."/>
            <person name="Wall M."/>
            <person name="Wallis J.M."/>
            <person name="West A.P."/>
            <person name="Whitehead S.L."/>
            <person name="Willey D.L."/>
            <person name="Williams S.A."/>
            <person name="Wilming L."/>
            <person name="Wray P.W."/>
            <person name="Young L."/>
            <person name="Ashurst J.L."/>
            <person name="Coulson A."/>
            <person name="Blocker H."/>
            <person name="Durbin R.M."/>
            <person name="Sulston J.E."/>
            <person name="Hubbard T."/>
            <person name="Jackson M.J."/>
            <person name="Bentley D.R."/>
            <person name="Beck S."/>
            <person name="Rogers J."/>
            <person name="Dunham I."/>
        </authorList>
    </citation>
    <scope>NUCLEOTIDE SEQUENCE [LARGE SCALE GENOMIC DNA]</scope>
</reference>
<reference key="4">
    <citation type="journal article" date="2004" name="Genome Res.">
        <title>The status, quality, and expansion of the NIH full-length cDNA project: the Mammalian Gene Collection (MGC).</title>
        <authorList>
            <consortium name="The MGC Project Team"/>
        </authorList>
    </citation>
    <scope>NUCLEOTIDE SEQUENCE [LARGE SCALE MRNA]</scope>
    <source>
        <tissue>Brain</tissue>
        <tissue>Lung</tissue>
    </source>
</reference>
<reference key="5">
    <citation type="journal article" date="2002" name="Biochem. Biophys. Res. Commun.">
        <title>Identification and characterization of a novel type of membrane-associated prostaglandin E synthase.</title>
        <authorList>
            <person name="Tanikawa N."/>
            <person name="Ohmiya Y."/>
            <person name="Ohkubo H."/>
            <person name="Hashimoto K."/>
            <person name="Kangawa K."/>
            <person name="Kojima M."/>
            <person name="Ito S."/>
            <person name="Watanabe K."/>
        </authorList>
    </citation>
    <scope>TISSUE SPECIFICITY</scope>
</reference>
<reference key="6">
    <citation type="journal article" date="2003" name="Biochem. Biophys. Res. Commun.">
        <title>Essential 110Cys in active site of membrane-associated prostaglandin E synthase-2.</title>
        <authorList>
            <person name="Watanabe K."/>
            <person name="Ohkubo H."/>
            <person name="Niwa H."/>
            <person name="Tanikawa N."/>
            <person name="Koda N."/>
            <person name="Ito S."/>
            <person name="Ohmiya Y."/>
        </authorList>
    </citation>
    <scope>CATALYTIC ACTIVITY</scope>
    <scope>MUTAGENESIS OF CYS-110 AND CYS-113</scope>
    <scope>ACTIVITY REGULATION</scope>
    <scope>FUNCTION</scope>
</reference>
<reference key="7">
    <citation type="journal article" date="2003" name="J. Biol. Chem.">
        <title>Cellular prostaglandin E2 production by membrane-bound prostaglandin E synthase-2 via both cyclooxygenases-1 and -2.</title>
        <authorList>
            <person name="Murakami M."/>
            <person name="Nakashima K."/>
            <person name="Kamei D."/>
            <person name="Masuda S."/>
            <person name="Ishikawa Y."/>
            <person name="Ishii T."/>
            <person name="Ohmiya Y."/>
            <person name="Watanabe K."/>
            <person name="Kudo I."/>
        </authorList>
    </citation>
    <scope>PROTEOLYTIC CLEAVAGE</scope>
    <scope>SUBCELLULAR LOCATION</scope>
</reference>
<reference key="8">
    <citation type="journal article" date="2004" name="Genome Res.">
        <title>A protein interaction framework for human mRNA degradation.</title>
        <authorList>
            <person name="Lehner B."/>
            <person name="Sanderson C.M."/>
        </authorList>
    </citation>
    <scope>INTERACTION WITH EXOSC10</scope>
</reference>
<reference key="9">
    <citation type="journal article" date="2007" name="Biochemistry">
        <title>PGH2 degradation pathway catalyzed by GSH-heme complex bound microsomal prostaglandin E2 synthase type 2: the first example of a dual-function enzyme.</title>
        <authorList>
            <person name="Yamada T."/>
            <person name="Takusagawa F."/>
        </authorList>
    </citation>
    <scope>CATALYTIC ACTIVITY</scope>
    <scope>FUNCTION</scope>
    <scope>BIOPHYSICOCHEMICAL PROPERTIES</scope>
    <scope>MUTAGENESIS OF CYS-110</scope>
</reference>
<reference key="10">
    <citation type="journal article" date="2008" name="Biochem. Biophys. Res. Commun.">
        <title>Studies on membrane-associated prostaglandin E synthase-2 with reference to production of 12L-hydroxy-5,8,10-heptadecatrienoic acid (HHT).</title>
        <authorList>
            <person name="Watanabe K."/>
            <person name="Ito S."/>
            <person name="Yamamoto S."/>
        </authorList>
    </citation>
    <scope>FUNCTION</scope>
    <scope>CATALYTIC ACTIVITY</scope>
    <scope>CAUTION</scope>
</reference>
<reference key="11">
    <citation type="journal article" date="2011" name="BMC Syst. Biol.">
        <title>Initial characterization of the human central proteome.</title>
        <authorList>
            <person name="Burkard T.R."/>
            <person name="Planyavsky M."/>
            <person name="Kaupe I."/>
            <person name="Breitwieser F.P."/>
            <person name="Buerckstuemmer T."/>
            <person name="Bennett K.L."/>
            <person name="Superti-Furga G."/>
            <person name="Colinge J."/>
        </authorList>
    </citation>
    <scope>IDENTIFICATION BY MASS SPECTROMETRY [LARGE SCALE ANALYSIS]</scope>
</reference>
<reference key="12">
    <citation type="journal article" date="2013" name="J. Proteome Res.">
        <title>Toward a comprehensive characterization of a human cancer cell phosphoproteome.</title>
        <authorList>
            <person name="Zhou H."/>
            <person name="Di Palma S."/>
            <person name="Preisinger C."/>
            <person name="Peng M."/>
            <person name="Polat A.N."/>
            <person name="Heck A.J."/>
            <person name="Mohammed S."/>
        </authorList>
    </citation>
    <scope>PHOSPHORYLATION [LARGE SCALE ANALYSIS] AT SER-95</scope>
    <scope>IDENTIFICATION BY MASS SPECTROMETRY [LARGE SCALE ANALYSIS]</scope>
    <source>
        <tissue>Cervix carcinoma</tissue>
    </source>
</reference>
<reference key="13">
    <citation type="journal article" date="2014" name="J. Proteomics">
        <title>An enzyme assisted RP-RPLC approach for in-depth analysis of human liver phosphoproteome.</title>
        <authorList>
            <person name="Bian Y."/>
            <person name="Song C."/>
            <person name="Cheng K."/>
            <person name="Dong M."/>
            <person name="Wang F."/>
            <person name="Huang J."/>
            <person name="Sun D."/>
            <person name="Wang L."/>
            <person name="Ye M."/>
            <person name="Zou H."/>
        </authorList>
    </citation>
    <scope>IDENTIFICATION BY MASS SPECTROMETRY [LARGE SCALE ANALYSIS]</scope>
    <source>
        <tissue>Liver</tissue>
    </source>
</reference>
<reference key="14">
    <citation type="journal article" date="2015" name="Proteomics">
        <title>N-terminome analysis of the human mitochondrial proteome.</title>
        <authorList>
            <person name="Vaca Jacome A.S."/>
            <person name="Rabilloud T."/>
            <person name="Schaeffer-Reiss C."/>
            <person name="Rompais M."/>
            <person name="Ayoub D."/>
            <person name="Lane L."/>
            <person name="Bairoch A."/>
            <person name="Van Dorsselaer A."/>
            <person name="Carapito C."/>
        </authorList>
    </citation>
    <scope>IDENTIFICATION BY MASS SPECTROMETRY [LARGE SCALE ANALYSIS]</scope>
</reference>
<dbReference type="EC" id="5.3.99.3" evidence="7 10 11"/>
<dbReference type="EMBL" id="AK024100">
    <property type="protein sequence ID" value="BAB14826.1"/>
    <property type="molecule type" value="mRNA"/>
</dbReference>
<dbReference type="EMBL" id="AK223520">
    <property type="protein sequence ID" value="BAD97240.1"/>
    <property type="molecule type" value="mRNA"/>
</dbReference>
<dbReference type="EMBL" id="AL590708">
    <property type="status" value="NOT_ANNOTATED_CDS"/>
    <property type="molecule type" value="Genomic_DNA"/>
</dbReference>
<dbReference type="EMBL" id="BC009397">
    <property type="protein sequence ID" value="AAH09397.2"/>
    <property type="molecule type" value="mRNA"/>
</dbReference>
<dbReference type="EMBL" id="BC009456">
    <property type="protein sequence ID" value="AAH09456.1"/>
    <property type="molecule type" value="mRNA"/>
</dbReference>
<dbReference type="EMBL" id="BC011613">
    <property type="protein sequence ID" value="AAH11613.1"/>
    <property type="molecule type" value="mRNA"/>
</dbReference>
<dbReference type="CCDS" id="CCDS6891.1"/>
<dbReference type="RefSeq" id="NP_001243264.1">
    <property type="nucleotide sequence ID" value="NM_001256335.1"/>
</dbReference>
<dbReference type="RefSeq" id="NP_079348.1">
    <property type="nucleotide sequence ID" value="NM_025072.7"/>
</dbReference>
<dbReference type="RefSeq" id="NP_945176.1">
    <property type="nucleotide sequence ID" value="NM_198938.2"/>
</dbReference>
<dbReference type="SMR" id="Q9H7Z7"/>
<dbReference type="BioGRID" id="123135">
    <property type="interactions" value="111"/>
</dbReference>
<dbReference type="FunCoup" id="Q9H7Z7">
    <property type="interactions" value="1592"/>
</dbReference>
<dbReference type="IntAct" id="Q9H7Z7">
    <property type="interactions" value="63"/>
</dbReference>
<dbReference type="MINT" id="Q9H7Z7"/>
<dbReference type="STRING" id="9606.ENSP00000345341"/>
<dbReference type="BindingDB" id="Q9H7Z7"/>
<dbReference type="ChEMBL" id="CHEMBL4411"/>
<dbReference type="GuidetoPHARMACOLOGY" id="1378"/>
<dbReference type="SwissLipids" id="SLP:000001095"/>
<dbReference type="GlyGen" id="Q9H7Z7">
    <property type="glycosylation" value="1 site, 1 O-linked glycan (1 site)"/>
</dbReference>
<dbReference type="iPTMnet" id="Q9H7Z7"/>
<dbReference type="MetOSite" id="Q9H7Z7"/>
<dbReference type="PhosphoSitePlus" id="Q9H7Z7"/>
<dbReference type="SwissPalm" id="Q9H7Z7"/>
<dbReference type="BioMuta" id="PTGES2"/>
<dbReference type="DMDM" id="73921741"/>
<dbReference type="jPOST" id="Q9H7Z7"/>
<dbReference type="MassIVE" id="Q9H7Z7"/>
<dbReference type="PaxDb" id="9606-ENSP00000345341"/>
<dbReference type="PeptideAtlas" id="Q9H7Z7"/>
<dbReference type="ProteomicsDB" id="81164"/>
<dbReference type="Pumba" id="Q9H7Z7"/>
<dbReference type="TopDownProteomics" id="Q9H7Z7"/>
<dbReference type="Antibodypedia" id="17330">
    <property type="antibodies" value="321 antibodies from 34 providers"/>
</dbReference>
<dbReference type="DNASU" id="80142"/>
<dbReference type="Ensembl" id="ENST00000338961.11">
    <property type="protein sequence ID" value="ENSP00000345341.6"/>
    <property type="gene ID" value="ENSG00000148334.16"/>
</dbReference>
<dbReference type="GeneID" id="80142"/>
<dbReference type="KEGG" id="hsa:80142"/>
<dbReference type="MANE-Select" id="ENST00000338961.11">
    <property type="protein sequence ID" value="ENSP00000345341.6"/>
    <property type="RefSeq nucleotide sequence ID" value="NM_025072.7"/>
    <property type="RefSeq protein sequence ID" value="NP_079348.1"/>
</dbReference>
<dbReference type="UCSC" id="uc004bti.4">
    <property type="organism name" value="human"/>
</dbReference>
<dbReference type="AGR" id="HGNC:17822"/>
<dbReference type="CTD" id="80142"/>
<dbReference type="DisGeNET" id="80142"/>
<dbReference type="GeneCards" id="PTGES2"/>
<dbReference type="HGNC" id="HGNC:17822">
    <property type="gene designation" value="PTGES2"/>
</dbReference>
<dbReference type="HPA" id="ENSG00000148334">
    <property type="expression patterns" value="Low tissue specificity"/>
</dbReference>
<dbReference type="MIM" id="608152">
    <property type="type" value="gene"/>
</dbReference>
<dbReference type="neXtProt" id="NX_Q9H7Z7"/>
<dbReference type="OpenTargets" id="ENSG00000148334"/>
<dbReference type="PharmGKB" id="PA33949"/>
<dbReference type="VEuPathDB" id="HostDB:ENSG00000148334"/>
<dbReference type="eggNOG" id="KOG3029">
    <property type="taxonomic scope" value="Eukaryota"/>
</dbReference>
<dbReference type="GeneTree" id="ENSGT00390000000224"/>
<dbReference type="HOGENOM" id="CLU_011226_0_0_1"/>
<dbReference type="InParanoid" id="Q9H7Z7"/>
<dbReference type="OMA" id="DYCLTEG"/>
<dbReference type="OrthoDB" id="423541at2759"/>
<dbReference type="PAN-GO" id="Q9H7Z7">
    <property type="GO annotations" value="2 GO annotations based on evolutionary models"/>
</dbReference>
<dbReference type="PhylomeDB" id="Q9H7Z7"/>
<dbReference type="TreeFam" id="TF314304"/>
<dbReference type="BioCyc" id="MetaCyc:HS07514-MONOMER"/>
<dbReference type="BRENDA" id="5.3.99.3">
    <property type="organism ID" value="2681"/>
</dbReference>
<dbReference type="PathwayCommons" id="Q9H7Z7"/>
<dbReference type="Reactome" id="R-HSA-2162123">
    <property type="pathway name" value="Synthesis of Prostaglandins (PG) and Thromboxanes (TX)"/>
</dbReference>
<dbReference type="Reactome" id="R-HSA-6798695">
    <property type="pathway name" value="Neutrophil degranulation"/>
</dbReference>
<dbReference type="SignaLink" id="Q9H7Z7"/>
<dbReference type="SIGNOR" id="Q9H7Z7"/>
<dbReference type="UniPathway" id="UPA00662"/>
<dbReference type="BioGRID-ORCS" id="80142">
    <property type="hits" value="20 hits in 1171 CRISPR screens"/>
</dbReference>
<dbReference type="ChiTaRS" id="PTGES2">
    <property type="organism name" value="human"/>
</dbReference>
<dbReference type="GeneWiki" id="PTGES2"/>
<dbReference type="GenomeRNAi" id="80142"/>
<dbReference type="Pharos" id="Q9H7Z7">
    <property type="development level" value="Tchem"/>
</dbReference>
<dbReference type="PRO" id="PR:Q9H7Z7"/>
<dbReference type="Proteomes" id="UP000005640">
    <property type="component" value="Chromosome 9"/>
</dbReference>
<dbReference type="RNAct" id="Q9H7Z7">
    <property type="molecule type" value="protein"/>
</dbReference>
<dbReference type="Bgee" id="ENSG00000148334">
    <property type="expression patterns" value="Expressed in apex of heart and 188 other cell types or tissues"/>
</dbReference>
<dbReference type="ExpressionAtlas" id="Q9H7Z7">
    <property type="expression patterns" value="baseline and differential"/>
</dbReference>
<dbReference type="GO" id="GO:0035578">
    <property type="term" value="C:azurophil granule lumen"/>
    <property type="evidence" value="ECO:0000304"/>
    <property type="project" value="Reactome"/>
</dbReference>
<dbReference type="GO" id="GO:0005829">
    <property type="term" value="C:cytosol"/>
    <property type="evidence" value="ECO:0000314"/>
    <property type="project" value="UniProtKB"/>
</dbReference>
<dbReference type="GO" id="GO:0005576">
    <property type="term" value="C:extracellular region"/>
    <property type="evidence" value="ECO:0000304"/>
    <property type="project" value="Reactome"/>
</dbReference>
<dbReference type="GO" id="GO:0000139">
    <property type="term" value="C:Golgi membrane"/>
    <property type="evidence" value="ECO:0000314"/>
    <property type="project" value="UniProtKB"/>
</dbReference>
<dbReference type="GO" id="GO:0005739">
    <property type="term" value="C:mitochondrion"/>
    <property type="evidence" value="ECO:0000314"/>
    <property type="project" value="LIFEdb"/>
</dbReference>
<dbReference type="GO" id="GO:0005634">
    <property type="term" value="C:nucleus"/>
    <property type="evidence" value="ECO:0007669"/>
    <property type="project" value="Ensembl"/>
</dbReference>
<dbReference type="GO" id="GO:0048471">
    <property type="term" value="C:perinuclear region of cytoplasm"/>
    <property type="evidence" value="ECO:0007669"/>
    <property type="project" value="UniProtKB-SubCell"/>
</dbReference>
<dbReference type="GO" id="GO:0036134">
    <property type="term" value="F:12-hydroxyheptadecatrienoic acid synthase activity"/>
    <property type="evidence" value="ECO:0007669"/>
    <property type="project" value="RHEA"/>
</dbReference>
<dbReference type="GO" id="GO:0003677">
    <property type="term" value="F:DNA binding"/>
    <property type="evidence" value="ECO:0007669"/>
    <property type="project" value="Ensembl"/>
</dbReference>
<dbReference type="GO" id="GO:0043295">
    <property type="term" value="F:glutathione binding"/>
    <property type="evidence" value="ECO:0000250"/>
    <property type="project" value="UniProtKB"/>
</dbReference>
<dbReference type="GO" id="GO:0020037">
    <property type="term" value="F:heme binding"/>
    <property type="evidence" value="ECO:0000250"/>
    <property type="project" value="UniProtKB"/>
</dbReference>
<dbReference type="GO" id="GO:0016829">
    <property type="term" value="F:lyase activity"/>
    <property type="evidence" value="ECO:0000314"/>
    <property type="project" value="UniProtKB"/>
</dbReference>
<dbReference type="GO" id="GO:0050220">
    <property type="term" value="F:prostaglandin-E synthase activity"/>
    <property type="evidence" value="ECO:0000314"/>
    <property type="project" value="FlyBase"/>
</dbReference>
<dbReference type="GO" id="GO:0006629">
    <property type="term" value="P:lipid metabolic process"/>
    <property type="evidence" value="ECO:0000314"/>
    <property type="project" value="UniProtKB"/>
</dbReference>
<dbReference type="GO" id="GO:0045893">
    <property type="term" value="P:positive regulation of DNA-templated transcription"/>
    <property type="evidence" value="ECO:0007669"/>
    <property type="project" value="Ensembl"/>
</dbReference>
<dbReference type="GO" id="GO:0001516">
    <property type="term" value="P:prostaglandin biosynthetic process"/>
    <property type="evidence" value="ECO:0007669"/>
    <property type="project" value="UniProtKB-UniPathway"/>
</dbReference>
<dbReference type="GO" id="GO:0046457">
    <property type="term" value="P:prostanoid biosynthetic process"/>
    <property type="evidence" value="ECO:0000304"/>
    <property type="project" value="Reactome"/>
</dbReference>
<dbReference type="GO" id="GO:0046903">
    <property type="term" value="P:secretion"/>
    <property type="evidence" value="ECO:0007669"/>
    <property type="project" value="Ensembl"/>
</dbReference>
<dbReference type="CDD" id="cd03197">
    <property type="entry name" value="GST_C_mPGES2"/>
    <property type="match status" value="1"/>
</dbReference>
<dbReference type="CDD" id="cd03040">
    <property type="entry name" value="GST_N_mPGES2"/>
    <property type="match status" value="1"/>
</dbReference>
<dbReference type="FunFam" id="1.20.1050.10:FF:000028">
    <property type="entry name" value="Prostaglandin E synthase 2"/>
    <property type="match status" value="1"/>
</dbReference>
<dbReference type="FunFam" id="3.40.30.10:FF:000114">
    <property type="entry name" value="Prostaglandin E synthase 2"/>
    <property type="match status" value="1"/>
</dbReference>
<dbReference type="FunFam" id="6.20.200.30:FF:000001">
    <property type="entry name" value="Prostaglandin E synthase 2"/>
    <property type="match status" value="1"/>
</dbReference>
<dbReference type="Gene3D" id="1.20.1050.10">
    <property type="match status" value="1"/>
</dbReference>
<dbReference type="Gene3D" id="6.20.200.30">
    <property type="match status" value="1"/>
</dbReference>
<dbReference type="Gene3D" id="3.40.30.10">
    <property type="entry name" value="Glutaredoxin"/>
    <property type="match status" value="1"/>
</dbReference>
<dbReference type="InterPro" id="IPR010987">
    <property type="entry name" value="Glutathione-S-Trfase_C-like"/>
</dbReference>
<dbReference type="InterPro" id="IPR036282">
    <property type="entry name" value="Glutathione-S-Trfase_C_sf"/>
</dbReference>
<dbReference type="InterPro" id="IPR040079">
    <property type="entry name" value="Glutathione_S-Trfase"/>
</dbReference>
<dbReference type="InterPro" id="IPR004045">
    <property type="entry name" value="Glutathione_S-Trfase_N"/>
</dbReference>
<dbReference type="InterPro" id="IPR034334">
    <property type="entry name" value="PGES2"/>
</dbReference>
<dbReference type="InterPro" id="IPR034335">
    <property type="entry name" value="PGES2_C"/>
</dbReference>
<dbReference type="InterPro" id="IPR036249">
    <property type="entry name" value="Thioredoxin-like_sf"/>
</dbReference>
<dbReference type="PANTHER" id="PTHR12782">
    <property type="entry name" value="MICROSOMAL PROSTAGLANDIN E SYNTHASE-2"/>
    <property type="match status" value="1"/>
</dbReference>
<dbReference type="PANTHER" id="PTHR12782:SF5">
    <property type="entry name" value="PROSTAGLANDIN E SYNTHASE 2"/>
    <property type="match status" value="1"/>
</dbReference>
<dbReference type="Pfam" id="PF13417">
    <property type="entry name" value="GST_N_3"/>
    <property type="match status" value="1"/>
</dbReference>
<dbReference type="SFLD" id="SFLDS00019">
    <property type="entry name" value="Glutathione_Transferase_(cytos"/>
    <property type="match status" value="1"/>
</dbReference>
<dbReference type="SFLD" id="SFLDG01203">
    <property type="entry name" value="Prostaglandin_E_synthase_like1"/>
    <property type="match status" value="1"/>
</dbReference>
<dbReference type="SUPFAM" id="SSF47616">
    <property type="entry name" value="GST C-terminal domain-like"/>
    <property type="match status" value="1"/>
</dbReference>
<dbReference type="SUPFAM" id="SSF52833">
    <property type="entry name" value="Thioredoxin-like"/>
    <property type="match status" value="1"/>
</dbReference>
<dbReference type="PROSITE" id="PS00195">
    <property type="entry name" value="GLUTAREDOXIN_1"/>
    <property type="match status" value="1"/>
</dbReference>
<dbReference type="PROSITE" id="PS51354">
    <property type="entry name" value="GLUTAREDOXIN_2"/>
    <property type="match status" value="1"/>
</dbReference>
<dbReference type="PROSITE" id="PS50405">
    <property type="entry name" value="GST_CTER"/>
    <property type="match status" value="1"/>
</dbReference>
<proteinExistence type="evidence at protein level"/>
<protein>
    <recommendedName>
        <fullName>Prostaglandin E synthase 2</fullName>
        <ecNumber evidence="7 10 11">5.3.99.3</ecNumber>
    </recommendedName>
    <alternativeName>
        <fullName evidence="12">Membrane-associated prostaglandin E synthase-2</fullName>
        <shortName evidence="12">mPGE synthase-2</shortName>
    </alternativeName>
    <alternativeName>
        <fullName>Microsomal prostaglandin E synthase 2</fullName>
        <shortName>mPGES-2</shortName>
    </alternativeName>
    <alternativeName>
        <fullName>Prostaglandin-H(2) E-isomerase</fullName>
    </alternativeName>
    <component>
        <recommendedName>
            <fullName>Prostaglandin E synthase 2 truncated form</fullName>
        </recommendedName>
    </component>
</protein>